<accession>Q62JK8</accession>
<sequence length="423" mass="46367">MADKKGSNSEKLLYCSFCGKSQHEVKKLIAGPSVFICDECIDLCNEIIRDEAAAAGVEASLSKSDLPSPQEIRDILDQYVIGQERAKKILAVAVYNHYKRLKHLDKKDDVELSKSNILLIGPTGSGKTLLAQTLARLLNVPFVIADATTLTEAGYVGEDVENIIQKLLQNCNYEVEKAQRGIVYIDEIDKISCKSDNPSITRDVSGEGVQQALLKLVEGTMASVPPQGGRKHPNQDFIQVDTTNILFICGGAFDGLEKVITDRTEKTGIGFGATVKSKQERDAGEVLREVEPEDLIKFGLIPELIGRLPVVATLGKLDEAALMKILVEPKNALVKQYQKLFAMERVELEIRPDALQAVARKAIRRKTGARGLRSIIEQALLDVMYELPTLKGVSKVIIDDNVIEGDGKPLLIYEDTPKVAGSN</sequence>
<organism>
    <name type="scientific">Burkholderia mallei (strain ATCC 23344)</name>
    <dbReference type="NCBI Taxonomy" id="243160"/>
    <lineage>
        <taxon>Bacteria</taxon>
        <taxon>Pseudomonadati</taxon>
        <taxon>Pseudomonadota</taxon>
        <taxon>Betaproteobacteria</taxon>
        <taxon>Burkholderiales</taxon>
        <taxon>Burkholderiaceae</taxon>
        <taxon>Burkholderia</taxon>
        <taxon>pseudomallei group</taxon>
    </lineage>
</organism>
<name>CLPX_BURMA</name>
<gene>
    <name evidence="1" type="primary">clpX</name>
    <name type="ordered locus">BMA1464</name>
</gene>
<feature type="chain" id="PRO_0000160331" description="ATP-dependent Clp protease ATP-binding subunit ClpX">
    <location>
        <begin position="1"/>
        <end position="423"/>
    </location>
</feature>
<feature type="domain" description="ClpX-type ZB" evidence="2">
    <location>
        <begin position="3"/>
        <end position="56"/>
    </location>
</feature>
<feature type="binding site" evidence="2">
    <location>
        <position position="15"/>
    </location>
    <ligand>
        <name>Zn(2+)</name>
        <dbReference type="ChEBI" id="CHEBI:29105"/>
    </ligand>
</feature>
<feature type="binding site" evidence="2">
    <location>
        <position position="18"/>
    </location>
    <ligand>
        <name>Zn(2+)</name>
        <dbReference type="ChEBI" id="CHEBI:29105"/>
    </ligand>
</feature>
<feature type="binding site" evidence="2">
    <location>
        <position position="37"/>
    </location>
    <ligand>
        <name>Zn(2+)</name>
        <dbReference type="ChEBI" id="CHEBI:29105"/>
    </ligand>
</feature>
<feature type="binding site" evidence="2">
    <location>
        <position position="40"/>
    </location>
    <ligand>
        <name>Zn(2+)</name>
        <dbReference type="ChEBI" id="CHEBI:29105"/>
    </ligand>
</feature>
<feature type="binding site" evidence="1">
    <location>
        <begin position="122"/>
        <end position="129"/>
    </location>
    <ligand>
        <name>ATP</name>
        <dbReference type="ChEBI" id="CHEBI:30616"/>
    </ligand>
</feature>
<keyword id="KW-0067">ATP-binding</keyword>
<keyword id="KW-0143">Chaperone</keyword>
<keyword id="KW-0479">Metal-binding</keyword>
<keyword id="KW-0547">Nucleotide-binding</keyword>
<keyword id="KW-1185">Reference proteome</keyword>
<keyword id="KW-0862">Zinc</keyword>
<dbReference type="EMBL" id="CP000010">
    <property type="protein sequence ID" value="AAU47682.1"/>
    <property type="molecule type" value="Genomic_DNA"/>
</dbReference>
<dbReference type="RefSeq" id="WP_004192165.1">
    <property type="nucleotide sequence ID" value="NC_006348.1"/>
</dbReference>
<dbReference type="RefSeq" id="YP_103111.1">
    <property type="nucleotide sequence ID" value="NC_006348.1"/>
</dbReference>
<dbReference type="SMR" id="Q62JK8"/>
<dbReference type="GeneID" id="92979195"/>
<dbReference type="KEGG" id="bma:BMA1464"/>
<dbReference type="PATRIC" id="fig|243160.12.peg.1504"/>
<dbReference type="eggNOG" id="COG1219">
    <property type="taxonomic scope" value="Bacteria"/>
</dbReference>
<dbReference type="HOGENOM" id="CLU_014218_8_2_4"/>
<dbReference type="Proteomes" id="UP000006693">
    <property type="component" value="Chromosome 1"/>
</dbReference>
<dbReference type="GO" id="GO:0009376">
    <property type="term" value="C:HslUV protease complex"/>
    <property type="evidence" value="ECO:0007669"/>
    <property type="project" value="TreeGrafter"/>
</dbReference>
<dbReference type="GO" id="GO:0005524">
    <property type="term" value="F:ATP binding"/>
    <property type="evidence" value="ECO:0007669"/>
    <property type="project" value="UniProtKB-UniRule"/>
</dbReference>
<dbReference type="GO" id="GO:0016887">
    <property type="term" value="F:ATP hydrolysis activity"/>
    <property type="evidence" value="ECO:0007669"/>
    <property type="project" value="InterPro"/>
</dbReference>
<dbReference type="GO" id="GO:0140662">
    <property type="term" value="F:ATP-dependent protein folding chaperone"/>
    <property type="evidence" value="ECO:0007669"/>
    <property type="project" value="InterPro"/>
</dbReference>
<dbReference type="GO" id="GO:0046983">
    <property type="term" value="F:protein dimerization activity"/>
    <property type="evidence" value="ECO:0007669"/>
    <property type="project" value="InterPro"/>
</dbReference>
<dbReference type="GO" id="GO:0051082">
    <property type="term" value="F:unfolded protein binding"/>
    <property type="evidence" value="ECO:0007669"/>
    <property type="project" value="UniProtKB-UniRule"/>
</dbReference>
<dbReference type="GO" id="GO:0008270">
    <property type="term" value="F:zinc ion binding"/>
    <property type="evidence" value="ECO:0007669"/>
    <property type="project" value="InterPro"/>
</dbReference>
<dbReference type="GO" id="GO:0051301">
    <property type="term" value="P:cell division"/>
    <property type="evidence" value="ECO:0007669"/>
    <property type="project" value="TreeGrafter"/>
</dbReference>
<dbReference type="GO" id="GO:0051603">
    <property type="term" value="P:proteolysis involved in protein catabolic process"/>
    <property type="evidence" value="ECO:0007669"/>
    <property type="project" value="TreeGrafter"/>
</dbReference>
<dbReference type="CDD" id="cd19497">
    <property type="entry name" value="RecA-like_ClpX"/>
    <property type="match status" value="1"/>
</dbReference>
<dbReference type="FunFam" id="1.10.8.60:FF:000002">
    <property type="entry name" value="ATP-dependent Clp protease ATP-binding subunit ClpX"/>
    <property type="match status" value="1"/>
</dbReference>
<dbReference type="FunFam" id="3.40.50.300:FF:000005">
    <property type="entry name" value="ATP-dependent Clp protease ATP-binding subunit ClpX"/>
    <property type="match status" value="1"/>
</dbReference>
<dbReference type="Gene3D" id="1.10.8.60">
    <property type="match status" value="1"/>
</dbReference>
<dbReference type="Gene3D" id="6.20.220.10">
    <property type="entry name" value="ClpX chaperone, C4-type zinc finger domain"/>
    <property type="match status" value="1"/>
</dbReference>
<dbReference type="Gene3D" id="3.40.50.300">
    <property type="entry name" value="P-loop containing nucleotide triphosphate hydrolases"/>
    <property type="match status" value="1"/>
</dbReference>
<dbReference type="HAMAP" id="MF_00175">
    <property type="entry name" value="ClpX"/>
    <property type="match status" value="1"/>
</dbReference>
<dbReference type="InterPro" id="IPR003593">
    <property type="entry name" value="AAA+_ATPase"/>
</dbReference>
<dbReference type="InterPro" id="IPR050052">
    <property type="entry name" value="ATP-dep_Clp_protease_ClpX"/>
</dbReference>
<dbReference type="InterPro" id="IPR003959">
    <property type="entry name" value="ATPase_AAA_core"/>
</dbReference>
<dbReference type="InterPro" id="IPR019489">
    <property type="entry name" value="Clp_ATPase_C"/>
</dbReference>
<dbReference type="InterPro" id="IPR004487">
    <property type="entry name" value="Clp_protease_ATP-bd_su_ClpX"/>
</dbReference>
<dbReference type="InterPro" id="IPR046425">
    <property type="entry name" value="ClpX_bact"/>
</dbReference>
<dbReference type="InterPro" id="IPR027417">
    <property type="entry name" value="P-loop_NTPase"/>
</dbReference>
<dbReference type="InterPro" id="IPR010603">
    <property type="entry name" value="Znf_CppX_C4"/>
</dbReference>
<dbReference type="InterPro" id="IPR038366">
    <property type="entry name" value="Znf_CppX_C4_sf"/>
</dbReference>
<dbReference type="NCBIfam" id="TIGR00382">
    <property type="entry name" value="clpX"/>
    <property type="match status" value="1"/>
</dbReference>
<dbReference type="NCBIfam" id="NF003745">
    <property type="entry name" value="PRK05342.1"/>
    <property type="match status" value="1"/>
</dbReference>
<dbReference type="PANTHER" id="PTHR48102:SF7">
    <property type="entry name" value="ATP-DEPENDENT CLP PROTEASE ATP-BINDING SUBUNIT CLPX-LIKE, MITOCHONDRIAL"/>
    <property type="match status" value="1"/>
</dbReference>
<dbReference type="PANTHER" id="PTHR48102">
    <property type="entry name" value="ATP-DEPENDENT CLP PROTEASE ATP-BINDING SUBUNIT CLPX-LIKE, MITOCHONDRIAL-RELATED"/>
    <property type="match status" value="1"/>
</dbReference>
<dbReference type="Pfam" id="PF07724">
    <property type="entry name" value="AAA_2"/>
    <property type="match status" value="1"/>
</dbReference>
<dbReference type="Pfam" id="PF10431">
    <property type="entry name" value="ClpB_D2-small"/>
    <property type="match status" value="1"/>
</dbReference>
<dbReference type="Pfam" id="PF06689">
    <property type="entry name" value="zf-C4_ClpX"/>
    <property type="match status" value="1"/>
</dbReference>
<dbReference type="SMART" id="SM00382">
    <property type="entry name" value="AAA"/>
    <property type="match status" value="1"/>
</dbReference>
<dbReference type="SMART" id="SM01086">
    <property type="entry name" value="ClpB_D2-small"/>
    <property type="match status" value="1"/>
</dbReference>
<dbReference type="SMART" id="SM00994">
    <property type="entry name" value="zf-C4_ClpX"/>
    <property type="match status" value="1"/>
</dbReference>
<dbReference type="SUPFAM" id="SSF57716">
    <property type="entry name" value="Glucocorticoid receptor-like (DNA-binding domain)"/>
    <property type="match status" value="1"/>
</dbReference>
<dbReference type="SUPFAM" id="SSF52540">
    <property type="entry name" value="P-loop containing nucleoside triphosphate hydrolases"/>
    <property type="match status" value="1"/>
</dbReference>
<dbReference type="PROSITE" id="PS51902">
    <property type="entry name" value="CLPX_ZB"/>
    <property type="match status" value="1"/>
</dbReference>
<reference key="1">
    <citation type="journal article" date="2004" name="Proc. Natl. Acad. Sci. U.S.A.">
        <title>Structural flexibility in the Burkholderia mallei genome.</title>
        <authorList>
            <person name="Nierman W.C."/>
            <person name="DeShazer D."/>
            <person name="Kim H.S."/>
            <person name="Tettelin H."/>
            <person name="Nelson K.E."/>
            <person name="Feldblyum T.V."/>
            <person name="Ulrich R.L."/>
            <person name="Ronning C.M."/>
            <person name="Brinkac L.M."/>
            <person name="Daugherty S.C."/>
            <person name="Davidsen T.D."/>
            <person name="DeBoy R.T."/>
            <person name="Dimitrov G."/>
            <person name="Dodson R.J."/>
            <person name="Durkin A.S."/>
            <person name="Gwinn M.L."/>
            <person name="Haft D.H."/>
            <person name="Khouri H.M."/>
            <person name="Kolonay J.F."/>
            <person name="Madupu R."/>
            <person name="Mohammoud Y."/>
            <person name="Nelson W.C."/>
            <person name="Radune D."/>
            <person name="Romero C.M."/>
            <person name="Sarria S."/>
            <person name="Selengut J."/>
            <person name="Shamblin C."/>
            <person name="Sullivan S.A."/>
            <person name="White O."/>
            <person name="Yu Y."/>
            <person name="Zafar N."/>
            <person name="Zhou L."/>
            <person name="Fraser C.M."/>
        </authorList>
    </citation>
    <scope>NUCLEOTIDE SEQUENCE [LARGE SCALE GENOMIC DNA]</scope>
    <source>
        <strain>ATCC 23344</strain>
    </source>
</reference>
<evidence type="ECO:0000255" key="1">
    <source>
        <dbReference type="HAMAP-Rule" id="MF_00175"/>
    </source>
</evidence>
<evidence type="ECO:0000255" key="2">
    <source>
        <dbReference type="PROSITE-ProRule" id="PRU01250"/>
    </source>
</evidence>
<comment type="function">
    <text evidence="1">ATP-dependent specificity component of the Clp protease. It directs the protease to specific substrates. Can perform chaperone functions in the absence of ClpP.</text>
</comment>
<comment type="subunit">
    <text evidence="1">Component of the ClpX-ClpP complex. Forms a hexameric ring that, in the presence of ATP, binds to fourteen ClpP subunits assembled into a disk-like structure with a central cavity, resembling the structure of eukaryotic proteasomes.</text>
</comment>
<comment type="similarity">
    <text evidence="1">Belongs to the ClpX chaperone family.</text>
</comment>
<proteinExistence type="inferred from homology"/>
<protein>
    <recommendedName>
        <fullName evidence="1">ATP-dependent Clp protease ATP-binding subunit ClpX</fullName>
    </recommendedName>
</protein>